<proteinExistence type="evidence at protein level"/>
<keyword id="KW-1185">Reference proteome</keyword>
<accession>P27383</accession>
<accession>Q3T4N9</accession>
<sequence length="86" mass="9538">MMGKGFEMMVASAIRAAGINPDELMEKANTLVHNLNYQLDRFGQRLDSIDSRLSVIEKALDISPAEKPDNQPELTGITFEGDNNDQ</sequence>
<organism>
    <name type="scientific">Enterobacteria phage PRD1</name>
    <name type="common">Bacteriophage PRD1</name>
    <dbReference type="NCBI Taxonomy" id="10658"/>
    <lineage>
        <taxon>Viruses</taxon>
        <taxon>Varidnaviria</taxon>
        <taxon>Bamfordvirae</taxon>
        <taxon>Preplasmiviricota</taxon>
        <taxon>Tectiliviricetes</taxon>
        <taxon>Kalamavirales</taxon>
        <taxon>Tectiviridae</taxon>
        <taxon>Alphatectivirus</taxon>
        <taxon>Alphatectivirus PRD1</taxon>
    </lineage>
</organism>
<feature type="chain" id="PRO_0000165355" description="Protein P17">
    <location>
        <begin position="1"/>
        <end position="86"/>
    </location>
</feature>
<feature type="region of interest" description="Disordered" evidence="1">
    <location>
        <begin position="63"/>
        <end position="86"/>
    </location>
</feature>
<comment type="function">
    <text>Assembly protein that acts late in phage assembly, after capsid protein folding and multimerization, and sorting of membrane proteins has occurred. The major coat protein P3 and two assembly factors (P10 and P17) are needed during the assembly of the virus particle inside the host cell, when the capsid protein multimers are capable of enclosing the host-derived membrane, containing the virus-encoded membrane-associated proteins.</text>
</comment>
<comment type="subunit">
    <text evidence="2">Homotetramer.</text>
</comment>
<name>VP17_BPPRD</name>
<protein>
    <recommendedName>
        <fullName>Protein P17</fullName>
    </recommendedName>
</protein>
<organismHost>
    <name type="scientific">Acinetobacter calcoaceticus</name>
    <dbReference type="NCBI Taxonomy" id="471"/>
</organismHost>
<organismHost>
    <name type="scientific">Escherichia coli</name>
    <dbReference type="NCBI Taxonomy" id="562"/>
</organismHost>
<organismHost>
    <name type="scientific">Proteus mirabilis</name>
    <dbReference type="NCBI Taxonomy" id="584"/>
</organismHost>
<organismHost>
    <name type="scientific">Pseudomonas aeruginosa</name>
    <dbReference type="NCBI Taxonomy" id="287"/>
</organismHost>
<organismHost>
    <name type="scientific">Pseudomonas fluorescens</name>
    <dbReference type="NCBI Taxonomy" id="294"/>
</organismHost>
<organismHost>
    <name type="scientific">Pseudomonas putida</name>
    <name type="common">Arthrobacter siderocapsulatus</name>
    <dbReference type="NCBI Taxonomy" id="303"/>
</organismHost>
<organismHost>
    <name type="scientific">Salmonella typhimurium</name>
    <dbReference type="NCBI Taxonomy" id="90371"/>
</organismHost>
<organismHost>
    <name type="scientific">Vibrio cholerae</name>
    <dbReference type="NCBI Taxonomy" id="666"/>
</organismHost>
<reference key="1">
    <citation type="journal article" date="1991" name="Virology">
        <title>Genome organization of membrane-containing bacteriophage PRD1.</title>
        <authorList>
            <person name="Bamford J.K.H."/>
            <person name="Haenninen A.-L."/>
            <person name="Pakula T.M."/>
            <person name="Ojala P.M."/>
            <person name="Kalkkinen N."/>
            <person name="Frilander M."/>
            <person name="Bamford D.H."/>
        </authorList>
    </citation>
    <scope>NUCLEOTIDE SEQUENCE [GENOMIC DNA]</scope>
</reference>
<reference key="2">
    <citation type="journal article" date="2005" name="J. Mol. Biol.">
        <title>A snapshot of viral evolution from genome analysis of the tectiviridae family.</title>
        <authorList>
            <person name="Saren A.M."/>
            <person name="Ravantti J.J."/>
            <person name="Benson S.D."/>
            <person name="Burnett R.M."/>
            <person name="Paulin L."/>
            <person name="Bamford D.H."/>
            <person name="Bamford J.K.H."/>
        </authorList>
    </citation>
    <scope>NUCLEOTIDE SEQUENCE [GENOMIC DNA]</scope>
</reference>
<reference key="3">
    <citation type="journal article" date="1999" name="Eur. J. Biochem.">
        <title>Purification and characterization of the assembly factor P17 of the lipid-containing bacteriophage PRD1.</title>
        <authorList>
            <person name="Caldentey J."/>
            <person name="Hanninen A.L."/>
            <person name="Holopainen J.M."/>
            <person name="Bamford J.K.H."/>
            <person name="Kinnunen P.K."/>
            <person name="Bamford D.H."/>
        </authorList>
    </citation>
    <scope>CHARACTERIZATION</scope>
    <scope>SUBUNIT</scope>
</reference>
<dbReference type="EMBL" id="AY848689">
    <property type="protein sequence ID" value="AAX45910.1"/>
    <property type="molecule type" value="Genomic_DNA"/>
</dbReference>
<dbReference type="PIR" id="G40477">
    <property type="entry name" value="WMBP77"/>
</dbReference>
<dbReference type="RefSeq" id="NP_040687.1">
    <property type="nucleotide sequence ID" value="NC_001421.2"/>
</dbReference>
<dbReference type="RefSeq" id="YP_009639961.1">
    <property type="nucleotide sequence ID" value="NC_001421.2"/>
</dbReference>
<dbReference type="SMR" id="P27383"/>
<dbReference type="GeneID" id="1260940"/>
<dbReference type="OrthoDB" id="33429at10239"/>
<dbReference type="Proteomes" id="UP000002143">
    <property type="component" value="Segment"/>
</dbReference>
<gene>
    <name type="primary">XVII</name>
</gene>
<evidence type="ECO:0000256" key="1">
    <source>
        <dbReference type="SAM" id="MobiDB-lite"/>
    </source>
</evidence>
<evidence type="ECO:0000269" key="2">
    <source>
    </source>
</evidence>